<dbReference type="EC" id="1.2.1.72" evidence="1"/>
<dbReference type="EMBL" id="AE014299">
    <property type="protein sequence ID" value="AAN54005.1"/>
    <property type="molecule type" value="Genomic_DNA"/>
</dbReference>
<dbReference type="RefSeq" id="NP_716560.1">
    <property type="nucleotide sequence ID" value="NC_004347.2"/>
</dbReference>
<dbReference type="RefSeq" id="WP_011071211.1">
    <property type="nucleotide sequence ID" value="NZ_CP053946.1"/>
</dbReference>
<dbReference type="SMR" id="Q8EIB2"/>
<dbReference type="STRING" id="211586.SO_0931"/>
<dbReference type="PaxDb" id="211586-SO_0931"/>
<dbReference type="KEGG" id="son:SO_0931"/>
<dbReference type="PATRIC" id="fig|211586.12.peg.893"/>
<dbReference type="eggNOG" id="COG0057">
    <property type="taxonomic scope" value="Bacteria"/>
</dbReference>
<dbReference type="HOGENOM" id="CLU_030140_0_0_6"/>
<dbReference type="OrthoDB" id="9803304at2"/>
<dbReference type="PhylomeDB" id="Q8EIB2"/>
<dbReference type="BioCyc" id="SONE211586:G1GMP-868-MONOMER"/>
<dbReference type="UniPathway" id="UPA00244">
    <property type="reaction ID" value="UER00309"/>
</dbReference>
<dbReference type="Proteomes" id="UP000008186">
    <property type="component" value="Chromosome"/>
</dbReference>
<dbReference type="GO" id="GO:0005829">
    <property type="term" value="C:cytosol"/>
    <property type="evidence" value="ECO:0000318"/>
    <property type="project" value="GO_Central"/>
</dbReference>
<dbReference type="GO" id="GO:0048001">
    <property type="term" value="F:erythrose-4-phosphate dehydrogenase activity"/>
    <property type="evidence" value="ECO:0007669"/>
    <property type="project" value="UniProtKB-UniRule"/>
</dbReference>
<dbReference type="GO" id="GO:0004365">
    <property type="term" value="F:glyceraldehyde-3-phosphate dehydrogenase (NAD+) (phosphorylating) activity"/>
    <property type="evidence" value="ECO:0000318"/>
    <property type="project" value="GO_Central"/>
</dbReference>
<dbReference type="GO" id="GO:0051287">
    <property type="term" value="F:NAD binding"/>
    <property type="evidence" value="ECO:0000318"/>
    <property type="project" value="GO_Central"/>
</dbReference>
<dbReference type="GO" id="GO:0006006">
    <property type="term" value="P:glucose metabolic process"/>
    <property type="evidence" value="ECO:0000318"/>
    <property type="project" value="GO_Central"/>
</dbReference>
<dbReference type="GO" id="GO:0042823">
    <property type="term" value="P:pyridoxal phosphate biosynthetic process"/>
    <property type="evidence" value="ECO:0007669"/>
    <property type="project" value="UniProtKB-UniRule"/>
</dbReference>
<dbReference type="GO" id="GO:0008615">
    <property type="term" value="P:pyridoxine biosynthetic process"/>
    <property type="evidence" value="ECO:0007669"/>
    <property type="project" value="UniProtKB-UniRule"/>
</dbReference>
<dbReference type="CDD" id="cd23937">
    <property type="entry name" value="GAPDH_C_E4PDH"/>
    <property type="match status" value="1"/>
</dbReference>
<dbReference type="CDD" id="cd17892">
    <property type="entry name" value="GAPDH_N_E4PDH"/>
    <property type="match status" value="1"/>
</dbReference>
<dbReference type="FunFam" id="3.30.360.10:FF:000007">
    <property type="entry name" value="D-erythrose-4-phosphate dehydrogenase"/>
    <property type="match status" value="1"/>
</dbReference>
<dbReference type="FunFam" id="3.40.50.720:FF:000001">
    <property type="entry name" value="Glyceraldehyde-3-phosphate dehydrogenase"/>
    <property type="match status" value="1"/>
</dbReference>
<dbReference type="Gene3D" id="3.30.360.10">
    <property type="entry name" value="Dihydrodipicolinate Reductase, domain 2"/>
    <property type="match status" value="1"/>
</dbReference>
<dbReference type="Gene3D" id="3.40.50.720">
    <property type="entry name" value="NAD(P)-binding Rossmann-like Domain"/>
    <property type="match status" value="1"/>
</dbReference>
<dbReference type="HAMAP" id="MF_01640">
    <property type="entry name" value="E4P_dehydrog"/>
    <property type="match status" value="1"/>
</dbReference>
<dbReference type="InterPro" id="IPR006422">
    <property type="entry name" value="E4P_DH_bac"/>
</dbReference>
<dbReference type="InterPro" id="IPR020831">
    <property type="entry name" value="GlycerAld/Erythrose_P_DH"/>
</dbReference>
<dbReference type="InterPro" id="IPR020830">
    <property type="entry name" value="GlycerAld_3-P_DH_AS"/>
</dbReference>
<dbReference type="InterPro" id="IPR020829">
    <property type="entry name" value="GlycerAld_3-P_DH_cat"/>
</dbReference>
<dbReference type="InterPro" id="IPR020828">
    <property type="entry name" value="GlycerAld_3-P_DH_NAD(P)-bd"/>
</dbReference>
<dbReference type="InterPro" id="IPR036291">
    <property type="entry name" value="NAD(P)-bd_dom_sf"/>
</dbReference>
<dbReference type="NCBIfam" id="TIGR01532">
    <property type="entry name" value="E4PD_g-proteo"/>
    <property type="match status" value="1"/>
</dbReference>
<dbReference type="NCBIfam" id="NF010058">
    <property type="entry name" value="PRK13535.1"/>
    <property type="match status" value="1"/>
</dbReference>
<dbReference type="PANTHER" id="PTHR43148">
    <property type="entry name" value="GLYCERALDEHYDE-3-PHOSPHATE DEHYDROGENASE 2"/>
    <property type="match status" value="1"/>
</dbReference>
<dbReference type="Pfam" id="PF02800">
    <property type="entry name" value="Gp_dh_C"/>
    <property type="match status" value="1"/>
</dbReference>
<dbReference type="Pfam" id="PF00044">
    <property type="entry name" value="Gp_dh_N"/>
    <property type="match status" value="1"/>
</dbReference>
<dbReference type="PIRSF" id="PIRSF000149">
    <property type="entry name" value="GAP_DH"/>
    <property type="match status" value="1"/>
</dbReference>
<dbReference type="PRINTS" id="PR00078">
    <property type="entry name" value="G3PDHDRGNASE"/>
</dbReference>
<dbReference type="SMART" id="SM00846">
    <property type="entry name" value="Gp_dh_N"/>
    <property type="match status" value="1"/>
</dbReference>
<dbReference type="SUPFAM" id="SSF55347">
    <property type="entry name" value="Glyceraldehyde-3-phosphate dehydrogenase-like, C-terminal domain"/>
    <property type="match status" value="1"/>
</dbReference>
<dbReference type="SUPFAM" id="SSF51735">
    <property type="entry name" value="NAD(P)-binding Rossmann-fold domains"/>
    <property type="match status" value="1"/>
</dbReference>
<dbReference type="PROSITE" id="PS00071">
    <property type="entry name" value="GAPDH"/>
    <property type="match status" value="1"/>
</dbReference>
<evidence type="ECO:0000255" key="1">
    <source>
        <dbReference type="HAMAP-Rule" id="MF_01640"/>
    </source>
</evidence>
<name>E4PD_SHEON</name>
<reference key="1">
    <citation type="journal article" date="2002" name="Nat. Biotechnol.">
        <title>Genome sequence of the dissimilatory metal ion-reducing bacterium Shewanella oneidensis.</title>
        <authorList>
            <person name="Heidelberg J.F."/>
            <person name="Paulsen I.T."/>
            <person name="Nelson K.E."/>
            <person name="Gaidos E.J."/>
            <person name="Nelson W.C."/>
            <person name="Read T.D."/>
            <person name="Eisen J.A."/>
            <person name="Seshadri R."/>
            <person name="Ward N.L."/>
            <person name="Methe B.A."/>
            <person name="Clayton R.A."/>
            <person name="Meyer T."/>
            <person name="Tsapin A."/>
            <person name="Scott J."/>
            <person name="Beanan M.J."/>
            <person name="Brinkac L.M."/>
            <person name="Daugherty S.C."/>
            <person name="DeBoy R.T."/>
            <person name="Dodson R.J."/>
            <person name="Durkin A.S."/>
            <person name="Haft D.H."/>
            <person name="Kolonay J.F."/>
            <person name="Madupu R."/>
            <person name="Peterson J.D."/>
            <person name="Umayam L.A."/>
            <person name="White O."/>
            <person name="Wolf A.M."/>
            <person name="Vamathevan J.J."/>
            <person name="Weidman J.F."/>
            <person name="Impraim M."/>
            <person name="Lee K."/>
            <person name="Berry K.J."/>
            <person name="Lee C."/>
            <person name="Mueller J."/>
            <person name="Khouri H.M."/>
            <person name="Gill J."/>
            <person name="Utterback T.R."/>
            <person name="McDonald L.A."/>
            <person name="Feldblyum T.V."/>
            <person name="Smith H.O."/>
            <person name="Venter J.C."/>
            <person name="Nealson K.H."/>
            <person name="Fraser C.M."/>
        </authorList>
    </citation>
    <scope>NUCLEOTIDE SEQUENCE [LARGE SCALE GENOMIC DNA]</scope>
    <source>
        <strain>ATCC 700550 / JCM 31522 / CIP 106686 / LMG 19005 / NCIMB 14063 / MR-1</strain>
    </source>
</reference>
<protein>
    <recommendedName>
        <fullName evidence="1">D-erythrose-4-phosphate dehydrogenase</fullName>
        <shortName evidence="1">E4PDH</shortName>
        <ecNumber evidence="1">1.2.1.72</ecNumber>
    </recommendedName>
</protein>
<feature type="chain" id="PRO_0000293164" description="D-erythrose-4-phosphate dehydrogenase">
    <location>
        <begin position="1"/>
        <end position="338"/>
    </location>
</feature>
<feature type="active site" description="Nucleophile" evidence="1">
    <location>
        <position position="154"/>
    </location>
</feature>
<feature type="binding site" evidence="1">
    <location>
        <begin position="11"/>
        <end position="12"/>
    </location>
    <ligand>
        <name>NAD(+)</name>
        <dbReference type="ChEBI" id="CHEBI:57540"/>
    </ligand>
</feature>
<feature type="binding site" evidence="1">
    <location>
        <begin position="153"/>
        <end position="155"/>
    </location>
    <ligand>
        <name>substrate</name>
    </ligand>
</feature>
<feature type="binding site" evidence="1">
    <location>
        <position position="199"/>
    </location>
    <ligand>
        <name>substrate</name>
    </ligand>
</feature>
<feature type="binding site" evidence="1">
    <location>
        <begin position="212"/>
        <end position="213"/>
    </location>
    <ligand>
        <name>substrate</name>
    </ligand>
</feature>
<feature type="binding site" evidence="1">
    <location>
        <position position="235"/>
    </location>
    <ligand>
        <name>substrate</name>
    </ligand>
</feature>
<feature type="binding site" evidence="1">
    <location>
        <position position="317"/>
    </location>
    <ligand>
        <name>NAD(+)</name>
        <dbReference type="ChEBI" id="CHEBI:57540"/>
    </ligand>
</feature>
<feature type="site" description="Activates thiol group during catalysis" evidence="1">
    <location>
        <position position="181"/>
    </location>
</feature>
<comment type="function">
    <text evidence="1">Catalyzes the NAD-dependent conversion of D-erythrose 4-phosphate to 4-phosphoerythronate.</text>
</comment>
<comment type="catalytic activity">
    <reaction evidence="1">
        <text>D-erythrose 4-phosphate + NAD(+) + H2O = 4-phospho-D-erythronate + NADH + 2 H(+)</text>
        <dbReference type="Rhea" id="RHEA:12056"/>
        <dbReference type="ChEBI" id="CHEBI:15377"/>
        <dbReference type="ChEBI" id="CHEBI:15378"/>
        <dbReference type="ChEBI" id="CHEBI:16897"/>
        <dbReference type="ChEBI" id="CHEBI:57540"/>
        <dbReference type="ChEBI" id="CHEBI:57945"/>
        <dbReference type="ChEBI" id="CHEBI:58766"/>
        <dbReference type="EC" id="1.2.1.72"/>
    </reaction>
</comment>
<comment type="pathway">
    <text evidence="1">Cofactor biosynthesis; pyridoxine 5'-phosphate biosynthesis; pyridoxine 5'-phosphate from D-erythrose 4-phosphate: step 1/5.</text>
</comment>
<comment type="subunit">
    <text evidence="1">Homotetramer.</text>
</comment>
<comment type="subcellular location">
    <subcellularLocation>
        <location evidence="1">Cytoplasm</location>
    </subcellularLocation>
</comment>
<comment type="similarity">
    <text evidence="1">Belongs to the glyceraldehyde-3-phosphate dehydrogenase family. Epd subfamily.</text>
</comment>
<accession>Q8EIB2</accession>
<sequence length="338" mass="37241">MIRVAINGYGRIGRSILRALYESGKRQQIQIVAINELAKPEAIIHLTQYDTTHGRFQPRVKLVDGQMQIGDDTIKIFHEPDPAKLPWRELDIDIVYEATGAILDRQSCEAHIHAGAKQVLISHPSSADVDGTIVYGVNHDLLRAEHTVVSNASCTTNCIVPVIDVLDKHFGVKSGAITTIHSAMNDQQVIDAYHDDLRRTRAAGQSIIPVDTKLARGIERILPHMKDKFEAISVRVPTINVTAIDLSVTLDKTVDIATVNQVLELAANGRFNGILGYTDEPLVSCDFNHDPRSSIVDGTQTRVSAGQLVKLLLWCDNEWGFANRMLDTSLAMIAAKQS</sequence>
<organism>
    <name type="scientific">Shewanella oneidensis (strain ATCC 700550 / JCM 31522 / CIP 106686 / LMG 19005 / NCIMB 14063 / MR-1)</name>
    <dbReference type="NCBI Taxonomy" id="211586"/>
    <lineage>
        <taxon>Bacteria</taxon>
        <taxon>Pseudomonadati</taxon>
        <taxon>Pseudomonadota</taxon>
        <taxon>Gammaproteobacteria</taxon>
        <taxon>Alteromonadales</taxon>
        <taxon>Shewanellaceae</taxon>
        <taxon>Shewanella</taxon>
    </lineage>
</organism>
<keyword id="KW-0963">Cytoplasm</keyword>
<keyword id="KW-0520">NAD</keyword>
<keyword id="KW-0560">Oxidoreductase</keyword>
<keyword id="KW-0664">Pyridoxine biosynthesis</keyword>
<keyword id="KW-1185">Reference proteome</keyword>
<gene>
    <name evidence="1" type="primary">epd</name>
    <name type="ordered locus">SO_0931</name>
</gene>
<proteinExistence type="inferred from homology"/>